<feature type="chain" id="PRO_0000097196" description="Receptor-binding cancer antigen expressed on SiSo cells">
    <location>
        <begin position="1"/>
        <end position="213"/>
    </location>
</feature>
<feature type="topological domain" description="Extracellular" evidence="3">
    <location>
        <begin position="1"/>
        <end position="7"/>
    </location>
</feature>
<feature type="transmembrane region" description="Helical; Signal-anchor for type III membrane protein" evidence="3">
    <location>
        <begin position="8"/>
        <end position="27"/>
    </location>
</feature>
<feature type="topological domain" description="Cytoplasmic" evidence="3">
    <location>
        <begin position="28"/>
        <end position="213"/>
    </location>
</feature>
<feature type="region of interest" description="Disordered" evidence="4">
    <location>
        <begin position="179"/>
        <end position="213"/>
    </location>
</feature>
<feature type="coiled-coil region" evidence="3">
    <location>
        <begin position="163"/>
        <end position="211"/>
    </location>
</feature>
<feature type="compositionally biased region" description="Basic and acidic residues" evidence="4">
    <location>
        <begin position="179"/>
        <end position="206"/>
    </location>
</feature>
<feature type="modified residue" description="Phosphoserine" evidence="7 8 9 10">
    <location>
        <position position="36"/>
    </location>
</feature>
<feature type="modified residue" description="Phosphothreonine" evidence="2">
    <location>
        <position position="41"/>
    </location>
</feature>
<feature type="modified residue" description="Phosphotyrosine" evidence="2">
    <location>
        <position position="94"/>
    </location>
</feature>
<feature type="sequence conflict" description="In Ref. 3; AAF23857." evidence="6" ref="3">
    <original>V</original>
    <variation>G</variation>
    <location>
        <position position="11"/>
    </location>
</feature>
<feature type="sequence conflict" description="In Ref. 3; AAF23857." evidence="6" ref="3">
    <original>P</original>
    <variation>A</variation>
    <location>
        <position position="115"/>
    </location>
</feature>
<feature type="sequence conflict" description="In Ref. 3; BAE35132." evidence="6" ref="3">
    <original>D</original>
    <variation>G</variation>
    <location>
        <position position="150"/>
    </location>
</feature>
<feature type="sequence conflict" description="In Ref. 3; AAF23857." evidence="6" ref="3">
    <original>N</original>
    <variation>S</variation>
    <location>
        <position position="157"/>
    </location>
</feature>
<evidence type="ECO:0000250" key="1"/>
<evidence type="ECO:0000250" key="2">
    <source>
        <dbReference type="UniProtKB" id="O00559"/>
    </source>
</evidence>
<evidence type="ECO:0000255" key="3"/>
<evidence type="ECO:0000256" key="4">
    <source>
        <dbReference type="SAM" id="MobiDB-lite"/>
    </source>
</evidence>
<evidence type="ECO:0000269" key="5">
    <source>
    </source>
</evidence>
<evidence type="ECO:0000305" key="6"/>
<evidence type="ECO:0007744" key="7">
    <source>
    </source>
</evidence>
<evidence type="ECO:0007744" key="8">
    <source>
    </source>
</evidence>
<evidence type="ECO:0007744" key="9">
    <source>
    </source>
</evidence>
<evidence type="ECO:0007744" key="10">
    <source>
    </source>
</evidence>
<protein>
    <recommendedName>
        <fullName>Receptor-binding cancer antigen expressed on SiSo cells</fullName>
    </recommendedName>
    <alternativeName>
        <fullName>Cancer-associated surface antigen RCAS1</fullName>
    </alternativeName>
    <alternativeName>
        <fullName>Estrogen receptor-binding fragment-associated gene 9 protein</fullName>
    </alternativeName>
</protein>
<comment type="function">
    <text evidence="1">May participate in suppression of cell proliferation and induces apoptotic cell death through activation of interleukin-1-beta converting enzyme (ICE)-like proteases.</text>
</comment>
<comment type="subunit">
    <text evidence="1">Homodimer.</text>
</comment>
<comment type="subcellular location">
    <subcellularLocation>
        <location evidence="1">Golgi apparatus membrane</location>
        <topology evidence="1">Single-pass type III membrane protein</topology>
    </subcellularLocation>
    <text evidence="1">Predominantly located in the Golgi.</text>
</comment>
<comment type="tissue specificity">
    <text evidence="5">Widely expressed. Expressed in heart, brain, spleen, liver, kidney and testis.</text>
</comment>
<comment type="developmental stage">
    <text evidence="5">Expressed in the developing embryo.</text>
</comment>
<comment type="induction">
    <text evidence="5">By 17-beta-estradiol (E2).</text>
</comment>
<comment type="domain">
    <text evidence="1">The coiled coil domain is necessary for the homodimerization.</text>
</comment>
<name>RCAS1_MOUSE</name>
<sequence>MAITQFRLFKVCTCLATVFSFLKRLICRSGRGRKLSGDQITLPTTVDYSSVPKQTDVEEWTSWDEDAPTSVKIEGGNGNVATQQNSLEQLEPDYFKDMTPTIRKTQKIVIKKREPLNFGVPDGSTGFSSRLAATQDMPFIHQSSELGDLDTWQENSNAWEEEEDAAWQAEEVLRQQKIADREKRAAEQQRKKMEKEAQRLMKKEQNKIGVKLS</sequence>
<keyword id="KW-0053">Apoptosis</keyword>
<keyword id="KW-0175">Coiled coil</keyword>
<keyword id="KW-0333">Golgi apparatus</keyword>
<keyword id="KW-0472">Membrane</keyword>
<keyword id="KW-0597">Phosphoprotein</keyword>
<keyword id="KW-1185">Reference proteome</keyword>
<keyword id="KW-0735">Signal-anchor</keyword>
<keyword id="KW-0812">Transmembrane</keyword>
<keyword id="KW-1133">Transmembrane helix</keyword>
<gene>
    <name type="primary">Ebag9</name>
    <name type="synonym">Rcas1</name>
</gene>
<proteinExistence type="evidence at protein level"/>
<reference key="1">
    <citation type="journal article" date="2001" name="Biochem. Biophys. Res. Commun.">
        <title>Molecular cloning and characterization of mouse EBAG9, homolog of a human cancer associated surface antigen: expression and regulation by estrogen.</title>
        <authorList>
            <person name="Tsuchiya F."/>
            <person name="Ikeda K."/>
            <person name="Tsutsumi O."/>
            <person name="Hiroi H."/>
            <person name="Momoeda M."/>
            <person name="Taketani Y."/>
            <person name="Muramatsu M."/>
            <person name="Inoue S."/>
        </authorList>
    </citation>
    <scope>NUCLEOTIDE SEQUENCE [MRNA]</scope>
    <scope>TISSUE SPECIFICITY</scope>
    <scope>DEVELOPMENTAL STAGE</scope>
    <scope>INDUCTION</scope>
    <source>
        <tissue>Brain</tissue>
    </source>
</reference>
<reference key="2">
    <citation type="submission" date="2000-01" db="EMBL/GenBank/DDBJ databases">
        <title>Human type II receptor like cancer associated surface antigen (RCAS1).</title>
        <authorList>
            <person name="Nakashima M."/>
            <person name="Sonoda K."/>
            <person name="Watanabe T."/>
        </authorList>
    </citation>
    <scope>NUCLEOTIDE SEQUENCE [MRNA]</scope>
    <source>
        <strain>C57BL/6J</strain>
    </source>
</reference>
<reference key="3">
    <citation type="journal article" date="2005" name="Science">
        <title>The transcriptional landscape of the mammalian genome.</title>
        <authorList>
            <person name="Carninci P."/>
            <person name="Kasukawa T."/>
            <person name="Katayama S."/>
            <person name="Gough J."/>
            <person name="Frith M.C."/>
            <person name="Maeda N."/>
            <person name="Oyama R."/>
            <person name="Ravasi T."/>
            <person name="Lenhard B."/>
            <person name="Wells C."/>
            <person name="Kodzius R."/>
            <person name="Shimokawa K."/>
            <person name="Bajic V.B."/>
            <person name="Brenner S.E."/>
            <person name="Batalov S."/>
            <person name="Forrest A.R."/>
            <person name="Zavolan M."/>
            <person name="Davis M.J."/>
            <person name="Wilming L.G."/>
            <person name="Aidinis V."/>
            <person name="Allen J.E."/>
            <person name="Ambesi-Impiombato A."/>
            <person name="Apweiler R."/>
            <person name="Aturaliya R.N."/>
            <person name="Bailey T.L."/>
            <person name="Bansal M."/>
            <person name="Baxter L."/>
            <person name="Beisel K.W."/>
            <person name="Bersano T."/>
            <person name="Bono H."/>
            <person name="Chalk A.M."/>
            <person name="Chiu K.P."/>
            <person name="Choudhary V."/>
            <person name="Christoffels A."/>
            <person name="Clutterbuck D.R."/>
            <person name="Crowe M.L."/>
            <person name="Dalla E."/>
            <person name="Dalrymple B.P."/>
            <person name="de Bono B."/>
            <person name="Della Gatta G."/>
            <person name="di Bernardo D."/>
            <person name="Down T."/>
            <person name="Engstrom P."/>
            <person name="Fagiolini M."/>
            <person name="Faulkner G."/>
            <person name="Fletcher C.F."/>
            <person name="Fukushima T."/>
            <person name="Furuno M."/>
            <person name="Futaki S."/>
            <person name="Gariboldi M."/>
            <person name="Georgii-Hemming P."/>
            <person name="Gingeras T.R."/>
            <person name="Gojobori T."/>
            <person name="Green R.E."/>
            <person name="Gustincich S."/>
            <person name="Harbers M."/>
            <person name="Hayashi Y."/>
            <person name="Hensch T.K."/>
            <person name="Hirokawa N."/>
            <person name="Hill D."/>
            <person name="Huminiecki L."/>
            <person name="Iacono M."/>
            <person name="Ikeo K."/>
            <person name="Iwama A."/>
            <person name="Ishikawa T."/>
            <person name="Jakt M."/>
            <person name="Kanapin A."/>
            <person name="Katoh M."/>
            <person name="Kawasawa Y."/>
            <person name="Kelso J."/>
            <person name="Kitamura H."/>
            <person name="Kitano H."/>
            <person name="Kollias G."/>
            <person name="Krishnan S.P."/>
            <person name="Kruger A."/>
            <person name="Kummerfeld S.K."/>
            <person name="Kurochkin I.V."/>
            <person name="Lareau L.F."/>
            <person name="Lazarevic D."/>
            <person name="Lipovich L."/>
            <person name="Liu J."/>
            <person name="Liuni S."/>
            <person name="McWilliam S."/>
            <person name="Madan Babu M."/>
            <person name="Madera M."/>
            <person name="Marchionni L."/>
            <person name="Matsuda H."/>
            <person name="Matsuzawa S."/>
            <person name="Miki H."/>
            <person name="Mignone F."/>
            <person name="Miyake S."/>
            <person name="Morris K."/>
            <person name="Mottagui-Tabar S."/>
            <person name="Mulder N."/>
            <person name="Nakano N."/>
            <person name="Nakauchi H."/>
            <person name="Ng P."/>
            <person name="Nilsson R."/>
            <person name="Nishiguchi S."/>
            <person name="Nishikawa S."/>
            <person name="Nori F."/>
            <person name="Ohara O."/>
            <person name="Okazaki Y."/>
            <person name="Orlando V."/>
            <person name="Pang K.C."/>
            <person name="Pavan W.J."/>
            <person name="Pavesi G."/>
            <person name="Pesole G."/>
            <person name="Petrovsky N."/>
            <person name="Piazza S."/>
            <person name="Reed J."/>
            <person name="Reid J.F."/>
            <person name="Ring B.Z."/>
            <person name="Ringwald M."/>
            <person name="Rost B."/>
            <person name="Ruan Y."/>
            <person name="Salzberg S.L."/>
            <person name="Sandelin A."/>
            <person name="Schneider C."/>
            <person name="Schoenbach C."/>
            <person name="Sekiguchi K."/>
            <person name="Semple C.A."/>
            <person name="Seno S."/>
            <person name="Sessa L."/>
            <person name="Sheng Y."/>
            <person name="Shibata Y."/>
            <person name="Shimada H."/>
            <person name="Shimada K."/>
            <person name="Silva D."/>
            <person name="Sinclair B."/>
            <person name="Sperling S."/>
            <person name="Stupka E."/>
            <person name="Sugiura K."/>
            <person name="Sultana R."/>
            <person name="Takenaka Y."/>
            <person name="Taki K."/>
            <person name="Tammoja K."/>
            <person name="Tan S.L."/>
            <person name="Tang S."/>
            <person name="Taylor M.S."/>
            <person name="Tegner J."/>
            <person name="Teichmann S.A."/>
            <person name="Ueda H.R."/>
            <person name="van Nimwegen E."/>
            <person name="Verardo R."/>
            <person name="Wei C.L."/>
            <person name="Yagi K."/>
            <person name="Yamanishi H."/>
            <person name="Zabarovsky E."/>
            <person name="Zhu S."/>
            <person name="Zimmer A."/>
            <person name="Hide W."/>
            <person name="Bult C."/>
            <person name="Grimmond S.M."/>
            <person name="Teasdale R.D."/>
            <person name="Liu E.T."/>
            <person name="Brusic V."/>
            <person name="Quackenbush J."/>
            <person name="Wahlestedt C."/>
            <person name="Mattick J.S."/>
            <person name="Hume D.A."/>
            <person name="Kai C."/>
            <person name="Sasaki D."/>
            <person name="Tomaru Y."/>
            <person name="Fukuda S."/>
            <person name="Kanamori-Katayama M."/>
            <person name="Suzuki M."/>
            <person name="Aoki J."/>
            <person name="Arakawa T."/>
            <person name="Iida J."/>
            <person name="Imamura K."/>
            <person name="Itoh M."/>
            <person name="Kato T."/>
            <person name="Kawaji H."/>
            <person name="Kawagashira N."/>
            <person name="Kawashima T."/>
            <person name="Kojima M."/>
            <person name="Kondo S."/>
            <person name="Konno H."/>
            <person name="Nakano K."/>
            <person name="Ninomiya N."/>
            <person name="Nishio T."/>
            <person name="Okada M."/>
            <person name="Plessy C."/>
            <person name="Shibata K."/>
            <person name="Shiraki T."/>
            <person name="Suzuki S."/>
            <person name="Tagami M."/>
            <person name="Waki K."/>
            <person name="Watahiki A."/>
            <person name="Okamura-Oho Y."/>
            <person name="Suzuki H."/>
            <person name="Kawai J."/>
            <person name="Hayashizaki Y."/>
        </authorList>
    </citation>
    <scope>NUCLEOTIDE SEQUENCE [LARGE SCALE MRNA]</scope>
    <source>
        <strain>C57BL/6J</strain>
        <tissue>Embryo</tissue>
        <tissue>Testis</tissue>
    </source>
</reference>
<reference key="4">
    <citation type="journal article" date="2004" name="Genome Res.">
        <title>The status, quality, and expansion of the NIH full-length cDNA project: the Mammalian Gene Collection (MGC).</title>
        <authorList>
            <consortium name="The MGC Project Team"/>
        </authorList>
    </citation>
    <scope>NUCLEOTIDE SEQUENCE [LARGE SCALE MRNA]</scope>
    <source>
        <strain>C57BL/6J</strain>
        <tissue>Brain</tissue>
        <tissue>Embryo</tissue>
    </source>
</reference>
<reference key="5">
    <citation type="journal article" date="2007" name="Mol. Cell. Proteomics">
        <title>Qualitative and quantitative analyses of protein phosphorylation in naive and stimulated mouse synaptosomal preparations.</title>
        <authorList>
            <person name="Munton R.P."/>
            <person name="Tweedie-Cullen R."/>
            <person name="Livingstone-Zatchej M."/>
            <person name="Weinandy F."/>
            <person name="Waidelich M."/>
            <person name="Longo D."/>
            <person name="Gehrig P."/>
            <person name="Potthast F."/>
            <person name="Rutishauser D."/>
            <person name="Gerrits B."/>
            <person name="Panse C."/>
            <person name="Schlapbach R."/>
            <person name="Mansuy I.M."/>
        </authorList>
    </citation>
    <scope>IDENTIFICATION BY MASS SPECTROMETRY [LARGE SCALE ANALYSIS]</scope>
    <source>
        <tissue>Brain cortex</tissue>
    </source>
</reference>
<reference key="6">
    <citation type="journal article" date="2007" name="Proc. Natl. Acad. Sci. U.S.A.">
        <title>Large-scale phosphorylation analysis of mouse liver.</title>
        <authorList>
            <person name="Villen J."/>
            <person name="Beausoleil S.A."/>
            <person name="Gerber S.A."/>
            <person name="Gygi S.P."/>
        </authorList>
    </citation>
    <scope>PHOSPHORYLATION [LARGE SCALE ANALYSIS] AT SER-36</scope>
    <scope>IDENTIFICATION BY MASS SPECTROMETRY [LARGE SCALE ANALYSIS]</scope>
    <source>
        <tissue>Liver</tissue>
    </source>
</reference>
<reference key="7">
    <citation type="journal article" date="2008" name="J. Proteome Res.">
        <title>Specific phosphopeptide enrichment with immobilized titanium ion affinity chromatography adsorbent for phosphoproteome analysis.</title>
        <authorList>
            <person name="Zhou H."/>
            <person name="Ye M."/>
            <person name="Dong J."/>
            <person name="Han G."/>
            <person name="Jiang X."/>
            <person name="Wu R."/>
            <person name="Zou H."/>
        </authorList>
    </citation>
    <scope>PHOSPHORYLATION [LARGE SCALE ANALYSIS] AT SER-36</scope>
    <scope>IDENTIFICATION BY MASS SPECTROMETRY [LARGE SCALE ANALYSIS]</scope>
    <source>
        <tissue>Liver</tissue>
    </source>
</reference>
<reference key="8">
    <citation type="journal article" date="2009" name="Immunity">
        <title>The phagosomal proteome in interferon-gamma-activated macrophages.</title>
        <authorList>
            <person name="Trost M."/>
            <person name="English L."/>
            <person name="Lemieux S."/>
            <person name="Courcelles M."/>
            <person name="Desjardins M."/>
            <person name="Thibault P."/>
        </authorList>
    </citation>
    <scope>PHOSPHORYLATION [LARGE SCALE ANALYSIS] AT SER-36</scope>
    <scope>IDENTIFICATION BY MASS SPECTROMETRY [LARGE SCALE ANALYSIS]</scope>
</reference>
<reference key="9">
    <citation type="journal article" date="2009" name="Mol. Cell. Proteomics">
        <title>Large scale localization of protein phosphorylation by use of electron capture dissociation mass spectrometry.</title>
        <authorList>
            <person name="Sweet S.M."/>
            <person name="Bailey C.M."/>
            <person name="Cunningham D.L."/>
            <person name="Heath J.K."/>
            <person name="Cooper H.J."/>
        </authorList>
    </citation>
    <scope>IDENTIFICATION BY MASS SPECTROMETRY [LARGE SCALE ANALYSIS]</scope>
    <source>
        <tissue>Embryonic fibroblast</tissue>
    </source>
</reference>
<reference key="10">
    <citation type="journal article" date="2010" name="Cell">
        <title>A tissue-specific atlas of mouse protein phosphorylation and expression.</title>
        <authorList>
            <person name="Huttlin E.L."/>
            <person name="Jedrychowski M.P."/>
            <person name="Elias J.E."/>
            <person name="Goswami T."/>
            <person name="Rad R."/>
            <person name="Beausoleil S.A."/>
            <person name="Villen J."/>
            <person name="Haas W."/>
            <person name="Sowa M.E."/>
            <person name="Gygi S.P."/>
        </authorList>
    </citation>
    <scope>PHOSPHORYLATION [LARGE SCALE ANALYSIS] AT SER-36</scope>
    <scope>IDENTIFICATION BY MASS SPECTROMETRY [LARGE SCALE ANALYSIS]</scope>
    <source>
        <tissue>Brain</tissue>
        <tissue>Brown adipose tissue</tissue>
        <tissue>Heart</tissue>
        <tissue>Kidney</tissue>
        <tissue>Liver</tissue>
        <tissue>Lung</tissue>
        <tissue>Pancreas</tissue>
        <tissue>Spleen</tissue>
        <tissue>Testis</tissue>
    </source>
</reference>
<accession>Q9D0V7</accession>
<accession>Q0VET4</accession>
<accession>Q3TVG2</accession>
<accession>Q3TWY4</accession>
<accession>Q9QYD0</accession>
<dbReference type="EMBL" id="AY009091">
    <property type="protein sequence ID" value="AAG41054.1"/>
    <property type="molecule type" value="mRNA"/>
</dbReference>
<dbReference type="EMBL" id="AF076524">
    <property type="protein sequence ID" value="AAF23857.1"/>
    <property type="molecule type" value="mRNA"/>
</dbReference>
<dbReference type="EMBL" id="AK004366">
    <property type="protein sequence ID" value="BAB23277.1"/>
    <property type="molecule type" value="mRNA"/>
</dbReference>
<dbReference type="EMBL" id="AK159499">
    <property type="protein sequence ID" value="BAE35132.1"/>
    <property type="molecule type" value="mRNA"/>
</dbReference>
<dbReference type="EMBL" id="AK160149">
    <property type="protein sequence ID" value="BAE35657.1"/>
    <property type="molecule type" value="mRNA"/>
</dbReference>
<dbReference type="EMBL" id="BC108397">
    <property type="protein sequence ID" value="AAI08398.1"/>
    <property type="molecule type" value="mRNA"/>
</dbReference>
<dbReference type="EMBL" id="BC119118">
    <property type="protein sequence ID" value="AAI19119.1"/>
    <property type="molecule type" value="mRNA"/>
</dbReference>
<dbReference type="EMBL" id="BC119120">
    <property type="protein sequence ID" value="AAI19121.1"/>
    <property type="molecule type" value="mRNA"/>
</dbReference>
<dbReference type="EMBL" id="BC144740">
    <property type="protein sequence ID" value="AAI44741.1"/>
    <property type="molecule type" value="mRNA"/>
</dbReference>
<dbReference type="CCDS" id="CCDS27457.1"/>
<dbReference type="PIR" id="JC7696">
    <property type="entry name" value="JC7696"/>
</dbReference>
<dbReference type="RefSeq" id="NP_001344619.1">
    <property type="nucleotide sequence ID" value="NM_001357690.2"/>
</dbReference>
<dbReference type="RefSeq" id="NP_001344620.1">
    <property type="nucleotide sequence ID" value="NM_001357691.2"/>
</dbReference>
<dbReference type="RefSeq" id="NP_001398858.1">
    <property type="nucleotide sequence ID" value="NM_001411929.1"/>
</dbReference>
<dbReference type="RefSeq" id="NP_062353.3">
    <property type="nucleotide sequence ID" value="NM_019480.4"/>
</dbReference>
<dbReference type="RefSeq" id="XP_006521256.1">
    <property type="nucleotide sequence ID" value="XM_006521193.2"/>
</dbReference>
<dbReference type="RefSeq" id="XP_006521257.1">
    <property type="nucleotide sequence ID" value="XM_006521194.3"/>
</dbReference>
<dbReference type="RefSeq" id="XP_006521258.1">
    <property type="nucleotide sequence ID" value="XM_006521195.3"/>
</dbReference>
<dbReference type="SMR" id="Q9D0V7"/>
<dbReference type="BioGRID" id="207747">
    <property type="interactions" value="1"/>
</dbReference>
<dbReference type="FunCoup" id="Q9D0V7">
    <property type="interactions" value="1994"/>
</dbReference>
<dbReference type="STRING" id="10090.ENSMUSP00000154361"/>
<dbReference type="iPTMnet" id="Q9D0V7"/>
<dbReference type="PhosphoSitePlus" id="Q9D0V7"/>
<dbReference type="SwissPalm" id="Q9D0V7"/>
<dbReference type="jPOST" id="Q9D0V7"/>
<dbReference type="PaxDb" id="10090-ENSMUSP00000022964"/>
<dbReference type="PeptideAtlas" id="Q9D0V7"/>
<dbReference type="ProteomicsDB" id="254903"/>
<dbReference type="Pumba" id="Q9D0V7"/>
<dbReference type="Antibodypedia" id="13458">
    <property type="antibodies" value="425 antibodies from 38 providers"/>
</dbReference>
<dbReference type="DNASU" id="55960"/>
<dbReference type="Ensembl" id="ENSMUST00000022964.9">
    <property type="protein sequence ID" value="ENSMUSP00000022964.8"/>
    <property type="gene ID" value="ENSMUSG00000022339.10"/>
</dbReference>
<dbReference type="Ensembl" id="ENSMUST00000226165.2">
    <property type="protein sequence ID" value="ENSMUSP00000153791.2"/>
    <property type="gene ID" value="ENSMUSG00000022339.10"/>
</dbReference>
<dbReference type="Ensembl" id="ENSMUST00000227691.2">
    <property type="protein sequence ID" value="ENSMUSP00000154361.2"/>
    <property type="gene ID" value="ENSMUSG00000022339.10"/>
</dbReference>
<dbReference type="GeneID" id="55960"/>
<dbReference type="KEGG" id="mmu:55960"/>
<dbReference type="UCSC" id="uc007vpz.1">
    <property type="organism name" value="mouse"/>
</dbReference>
<dbReference type="AGR" id="MGI:1859920"/>
<dbReference type="CTD" id="9166"/>
<dbReference type="MGI" id="MGI:1859920">
    <property type="gene designation" value="Ebag9"/>
</dbReference>
<dbReference type="VEuPathDB" id="HostDB:ENSMUSG00000022339"/>
<dbReference type="eggNOG" id="ENOG502QSN4">
    <property type="taxonomic scope" value="Eukaryota"/>
</dbReference>
<dbReference type="GeneTree" id="ENSGT00390000004040"/>
<dbReference type="HOGENOM" id="CLU_094995_0_0_1"/>
<dbReference type="InParanoid" id="Q9D0V7"/>
<dbReference type="OMA" id="LGEMENW"/>
<dbReference type="OrthoDB" id="10017216at2759"/>
<dbReference type="PhylomeDB" id="Q9D0V7"/>
<dbReference type="TreeFam" id="TF326584"/>
<dbReference type="BioGRID-ORCS" id="55960">
    <property type="hits" value="4 hits in 77 CRISPR screens"/>
</dbReference>
<dbReference type="ChiTaRS" id="Ebag9">
    <property type="organism name" value="mouse"/>
</dbReference>
<dbReference type="PRO" id="PR:Q9D0V7"/>
<dbReference type="Proteomes" id="UP000000589">
    <property type="component" value="Chromosome 15"/>
</dbReference>
<dbReference type="RNAct" id="Q9D0V7">
    <property type="molecule type" value="protein"/>
</dbReference>
<dbReference type="Bgee" id="ENSMUSG00000022339">
    <property type="expression patterns" value="Expressed in seminal vesicle and 246 other cell types or tissues"/>
</dbReference>
<dbReference type="ExpressionAtlas" id="Q9D0V7">
    <property type="expression patterns" value="baseline and differential"/>
</dbReference>
<dbReference type="GO" id="GO:0005794">
    <property type="term" value="C:Golgi apparatus"/>
    <property type="evidence" value="ECO:0000314"/>
    <property type="project" value="MGI"/>
</dbReference>
<dbReference type="GO" id="GO:0000139">
    <property type="term" value="C:Golgi membrane"/>
    <property type="evidence" value="ECO:0007669"/>
    <property type="project" value="UniProtKB-SubCell"/>
</dbReference>
<dbReference type="GO" id="GO:0090717">
    <property type="term" value="P:adaptive immune memory response involving T cells and B cells"/>
    <property type="evidence" value="ECO:0000315"/>
    <property type="project" value="MGI"/>
</dbReference>
<dbReference type="GO" id="GO:0006915">
    <property type="term" value="P:apoptotic process"/>
    <property type="evidence" value="ECO:0007669"/>
    <property type="project" value="UniProtKB-KW"/>
</dbReference>
<dbReference type="GO" id="GO:0001913">
    <property type="term" value="P:T cell mediated cytotoxicity"/>
    <property type="evidence" value="ECO:0000315"/>
    <property type="project" value="MGI"/>
</dbReference>
<dbReference type="InterPro" id="IPR017025">
    <property type="entry name" value="Cancer-assoc_antigen_RCAS1"/>
</dbReference>
<dbReference type="PANTHER" id="PTHR15208:SF2">
    <property type="entry name" value="RECEPTOR-BINDING CANCER ANTIGEN EXPRESSED ON SISO CELLS"/>
    <property type="match status" value="1"/>
</dbReference>
<dbReference type="PANTHER" id="PTHR15208">
    <property type="entry name" value="RECEPTOR-BINDING CANCER ANTIGEN EXPRESSED ON SISO CELLS CANCER ASSOCIATED SURFACE ANTIGEN RCAS1 ESTROGEN RECEPTOR-BINDING FRAGMENT- ASSOCIATED GENE 9 PROTEIN"/>
    <property type="match status" value="1"/>
</dbReference>
<dbReference type="PIRSF" id="PIRSF034247">
    <property type="entry name" value="RCAS1"/>
    <property type="match status" value="1"/>
</dbReference>
<organism>
    <name type="scientific">Mus musculus</name>
    <name type="common">Mouse</name>
    <dbReference type="NCBI Taxonomy" id="10090"/>
    <lineage>
        <taxon>Eukaryota</taxon>
        <taxon>Metazoa</taxon>
        <taxon>Chordata</taxon>
        <taxon>Craniata</taxon>
        <taxon>Vertebrata</taxon>
        <taxon>Euteleostomi</taxon>
        <taxon>Mammalia</taxon>
        <taxon>Eutheria</taxon>
        <taxon>Euarchontoglires</taxon>
        <taxon>Glires</taxon>
        <taxon>Rodentia</taxon>
        <taxon>Myomorpha</taxon>
        <taxon>Muroidea</taxon>
        <taxon>Muridae</taxon>
        <taxon>Murinae</taxon>
        <taxon>Mus</taxon>
        <taxon>Mus</taxon>
    </lineage>
</organism>